<accession>B1IIG7</accession>
<gene>
    <name evidence="1" type="primary">gltX</name>
    <name type="ordered locus">CLD_3466</name>
</gene>
<dbReference type="EC" id="6.1.1.17" evidence="1"/>
<dbReference type="EMBL" id="CP000939">
    <property type="protein sequence ID" value="ACA45673.1"/>
    <property type="molecule type" value="Genomic_DNA"/>
</dbReference>
<dbReference type="RefSeq" id="WP_003405139.1">
    <property type="nucleotide sequence ID" value="NC_010516.1"/>
</dbReference>
<dbReference type="SMR" id="B1IIG7"/>
<dbReference type="KEGG" id="cbb:CLD_3466"/>
<dbReference type="HOGENOM" id="CLU_015768_6_3_9"/>
<dbReference type="Proteomes" id="UP000008541">
    <property type="component" value="Chromosome"/>
</dbReference>
<dbReference type="GO" id="GO:0005737">
    <property type="term" value="C:cytoplasm"/>
    <property type="evidence" value="ECO:0007669"/>
    <property type="project" value="UniProtKB-SubCell"/>
</dbReference>
<dbReference type="GO" id="GO:0005524">
    <property type="term" value="F:ATP binding"/>
    <property type="evidence" value="ECO:0007669"/>
    <property type="project" value="UniProtKB-UniRule"/>
</dbReference>
<dbReference type="GO" id="GO:0004818">
    <property type="term" value="F:glutamate-tRNA ligase activity"/>
    <property type="evidence" value="ECO:0007669"/>
    <property type="project" value="UniProtKB-UniRule"/>
</dbReference>
<dbReference type="GO" id="GO:0000049">
    <property type="term" value="F:tRNA binding"/>
    <property type="evidence" value="ECO:0007669"/>
    <property type="project" value="InterPro"/>
</dbReference>
<dbReference type="GO" id="GO:0008270">
    <property type="term" value="F:zinc ion binding"/>
    <property type="evidence" value="ECO:0007669"/>
    <property type="project" value="UniProtKB-UniRule"/>
</dbReference>
<dbReference type="GO" id="GO:0006424">
    <property type="term" value="P:glutamyl-tRNA aminoacylation"/>
    <property type="evidence" value="ECO:0007669"/>
    <property type="project" value="UniProtKB-UniRule"/>
</dbReference>
<dbReference type="CDD" id="cd00808">
    <property type="entry name" value="GluRS_core"/>
    <property type="match status" value="1"/>
</dbReference>
<dbReference type="FunFam" id="3.40.50.620:FF:000045">
    <property type="entry name" value="Glutamate--tRNA ligase, mitochondrial"/>
    <property type="match status" value="1"/>
</dbReference>
<dbReference type="Gene3D" id="1.10.10.350">
    <property type="match status" value="1"/>
</dbReference>
<dbReference type="Gene3D" id="3.40.50.620">
    <property type="entry name" value="HUPs"/>
    <property type="match status" value="1"/>
</dbReference>
<dbReference type="HAMAP" id="MF_00022">
    <property type="entry name" value="Glu_tRNA_synth_type1"/>
    <property type="match status" value="1"/>
</dbReference>
<dbReference type="InterPro" id="IPR045462">
    <property type="entry name" value="aa-tRNA-synth_I_cd-bd"/>
</dbReference>
<dbReference type="InterPro" id="IPR020751">
    <property type="entry name" value="aa-tRNA-synth_I_codon-bd_sub2"/>
</dbReference>
<dbReference type="InterPro" id="IPR001412">
    <property type="entry name" value="aa-tRNA-synth_I_CS"/>
</dbReference>
<dbReference type="InterPro" id="IPR008925">
    <property type="entry name" value="aa_tRNA-synth_I_cd-bd_sf"/>
</dbReference>
<dbReference type="InterPro" id="IPR004527">
    <property type="entry name" value="Glu-tRNA-ligase_bac/mito"/>
</dbReference>
<dbReference type="InterPro" id="IPR000924">
    <property type="entry name" value="Glu/Gln-tRNA-synth"/>
</dbReference>
<dbReference type="InterPro" id="IPR020058">
    <property type="entry name" value="Glu/Gln-tRNA-synth_Ib_cat-dom"/>
</dbReference>
<dbReference type="InterPro" id="IPR049940">
    <property type="entry name" value="GluQ/Sye"/>
</dbReference>
<dbReference type="InterPro" id="IPR033910">
    <property type="entry name" value="GluRS_core"/>
</dbReference>
<dbReference type="InterPro" id="IPR014729">
    <property type="entry name" value="Rossmann-like_a/b/a_fold"/>
</dbReference>
<dbReference type="NCBIfam" id="TIGR00464">
    <property type="entry name" value="gltX_bact"/>
    <property type="match status" value="1"/>
</dbReference>
<dbReference type="PANTHER" id="PTHR43311">
    <property type="entry name" value="GLUTAMATE--TRNA LIGASE"/>
    <property type="match status" value="1"/>
</dbReference>
<dbReference type="PANTHER" id="PTHR43311:SF2">
    <property type="entry name" value="GLUTAMATE--TRNA LIGASE, MITOCHONDRIAL-RELATED"/>
    <property type="match status" value="1"/>
</dbReference>
<dbReference type="Pfam" id="PF19269">
    <property type="entry name" value="Anticodon_2"/>
    <property type="match status" value="1"/>
</dbReference>
<dbReference type="Pfam" id="PF00749">
    <property type="entry name" value="tRNA-synt_1c"/>
    <property type="match status" value="1"/>
</dbReference>
<dbReference type="PRINTS" id="PR00987">
    <property type="entry name" value="TRNASYNTHGLU"/>
</dbReference>
<dbReference type="SUPFAM" id="SSF48163">
    <property type="entry name" value="An anticodon-binding domain of class I aminoacyl-tRNA synthetases"/>
    <property type="match status" value="1"/>
</dbReference>
<dbReference type="SUPFAM" id="SSF52374">
    <property type="entry name" value="Nucleotidylyl transferase"/>
    <property type="match status" value="1"/>
</dbReference>
<dbReference type="PROSITE" id="PS00178">
    <property type="entry name" value="AA_TRNA_LIGASE_I"/>
    <property type="match status" value="1"/>
</dbReference>
<name>SYE_CLOBK</name>
<reference key="1">
    <citation type="journal article" date="2007" name="PLoS ONE">
        <title>Analysis of the neurotoxin complex genes in Clostridium botulinum A1-A4 and B1 strains: BoNT/A3, /Ba4 and /B1 clusters are located within plasmids.</title>
        <authorList>
            <person name="Smith T.J."/>
            <person name="Hill K.K."/>
            <person name="Foley B.T."/>
            <person name="Detter J.C."/>
            <person name="Munk A.C."/>
            <person name="Bruce D.C."/>
            <person name="Doggett N.A."/>
            <person name="Smith L.A."/>
            <person name="Marks J.D."/>
            <person name="Xie G."/>
            <person name="Brettin T.S."/>
        </authorList>
    </citation>
    <scope>NUCLEOTIDE SEQUENCE [LARGE SCALE GENOMIC DNA]</scope>
    <source>
        <strain>Okra / Type B1</strain>
    </source>
</reference>
<keyword id="KW-0030">Aminoacyl-tRNA synthetase</keyword>
<keyword id="KW-0067">ATP-binding</keyword>
<keyword id="KW-0963">Cytoplasm</keyword>
<keyword id="KW-0436">Ligase</keyword>
<keyword id="KW-0479">Metal-binding</keyword>
<keyword id="KW-0547">Nucleotide-binding</keyword>
<keyword id="KW-0648">Protein biosynthesis</keyword>
<keyword id="KW-0862">Zinc</keyword>
<protein>
    <recommendedName>
        <fullName evidence="1">Glutamate--tRNA ligase</fullName>
        <ecNumber evidence="1">6.1.1.17</ecNumber>
    </recommendedName>
    <alternativeName>
        <fullName evidence="1">Glutamyl-tRNA synthetase</fullName>
        <shortName evidence="1">GluRS</shortName>
    </alternativeName>
</protein>
<organism>
    <name type="scientific">Clostridium botulinum (strain Okra / Type B1)</name>
    <dbReference type="NCBI Taxonomy" id="498213"/>
    <lineage>
        <taxon>Bacteria</taxon>
        <taxon>Bacillati</taxon>
        <taxon>Bacillota</taxon>
        <taxon>Clostridia</taxon>
        <taxon>Eubacteriales</taxon>
        <taxon>Clostridiaceae</taxon>
        <taxon>Clostridium</taxon>
    </lineage>
</organism>
<proteinExistence type="inferred from homology"/>
<feature type="chain" id="PRO_1000090066" description="Glutamate--tRNA ligase">
    <location>
        <begin position="1"/>
        <end position="485"/>
    </location>
</feature>
<feature type="short sequence motif" description="'HIGH' region" evidence="1">
    <location>
        <begin position="11"/>
        <end position="21"/>
    </location>
</feature>
<feature type="short sequence motif" description="'KMSKS' region" evidence="1">
    <location>
        <begin position="252"/>
        <end position="256"/>
    </location>
</feature>
<feature type="binding site" evidence="1">
    <location>
        <position position="108"/>
    </location>
    <ligand>
        <name>Zn(2+)</name>
        <dbReference type="ChEBI" id="CHEBI:29105"/>
    </ligand>
</feature>
<feature type="binding site" evidence="1">
    <location>
        <position position="110"/>
    </location>
    <ligand>
        <name>Zn(2+)</name>
        <dbReference type="ChEBI" id="CHEBI:29105"/>
    </ligand>
</feature>
<feature type="binding site" evidence="1">
    <location>
        <position position="135"/>
    </location>
    <ligand>
        <name>Zn(2+)</name>
        <dbReference type="ChEBI" id="CHEBI:29105"/>
    </ligand>
</feature>
<feature type="binding site" evidence="1">
    <location>
        <position position="137"/>
    </location>
    <ligand>
        <name>Zn(2+)</name>
        <dbReference type="ChEBI" id="CHEBI:29105"/>
    </ligand>
</feature>
<feature type="binding site" evidence="1">
    <location>
        <position position="255"/>
    </location>
    <ligand>
        <name>ATP</name>
        <dbReference type="ChEBI" id="CHEBI:30616"/>
    </ligand>
</feature>
<sequence>MTNKVRTRFAPSPTGYMHVGNLRTALYAYLIAKHDNGDFILRIEDTDQERLVEGALDVIYNTLKITGLSHDEGPDIGGPVGPYVQSERRNIYIEYAEKLIEKGEAYYCFCSKERLDMLRANSEALKRPFRYDKHCIDLSKEEIDKKIAEGVPYVIRQKNPTTGSTSFHDEIYGDISVDNSELDDMILIKSDGLPTYNFANVVDDHLMGITHVVRGSEYLSSSPKYNRLYEAFGWDVPIYVHCPPIMKDEHHKLSKRNGDASFEDLMAKGYLKEAILNYIALLGWNPGGEKEVFSMEELIEAFNYRNINKAPAVFDTKKLKWMNGEYIRALSLDKFHEMALPYYEEALTRDLDTKKISELLHTRVEVLNEIPEQLDFFNNLLEYSPKMYIHKKMKTTYENSLKSLEEVLPKLEALENWTFENIKEVCMNLVKELEVKNGVVLWPIRTAVSGKQFTPGGAFEIADILGKEETLERIKIGIDKLKALQ</sequence>
<evidence type="ECO:0000255" key="1">
    <source>
        <dbReference type="HAMAP-Rule" id="MF_00022"/>
    </source>
</evidence>
<comment type="function">
    <text evidence="1">Catalyzes the attachment of glutamate to tRNA(Glu) in a two-step reaction: glutamate is first activated by ATP to form Glu-AMP and then transferred to the acceptor end of tRNA(Glu).</text>
</comment>
<comment type="catalytic activity">
    <reaction evidence="1">
        <text>tRNA(Glu) + L-glutamate + ATP = L-glutamyl-tRNA(Glu) + AMP + diphosphate</text>
        <dbReference type="Rhea" id="RHEA:23540"/>
        <dbReference type="Rhea" id="RHEA-COMP:9663"/>
        <dbReference type="Rhea" id="RHEA-COMP:9680"/>
        <dbReference type="ChEBI" id="CHEBI:29985"/>
        <dbReference type="ChEBI" id="CHEBI:30616"/>
        <dbReference type="ChEBI" id="CHEBI:33019"/>
        <dbReference type="ChEBI" id="CHEBI:78442"/>
        <dbReference type="ChEBI" id="CHEBI:78520"/>
        <dbReference type="ChEBI" id="CHEBI:456215"/>
        <dbReference type="EC" id="6.1.1.17"/>
    </reaction>
</comment>
<comment type="cofactor">
    <cofactor evidence="1">
        <name>Zn(2+)</name>
        <dbReference type="ChEBI" id="CHEBI:29105"/>
    </cofactor>
    <text evidence="1">Binds 1 zinc ion per subunit.</text>
</comment>
<comment type="subunit">
    <text evidence="1">Monomer.</text>
</comment>
<comment type="subcellular location">
    <subcellularLocation>
        <location evidence="1">Cytoplasm</location>
    </subcellularLocation>
</comment>
<comment type="similarity">
    <text evidence="1">Belongs to the class-I aminoacyl-tRNA synthetase family. Glutamate--tRNA ligase type 1 subfamily.</text>
</comment>